<proteinExistence type="inferred from homology"/>
<keyword id="KW-0067">ATP-binding</keyword>
<keyword id="KW-0963">Cytoplasm</keyword>
<keyword id="KW-0418">Kinase</keyword>
<keyword id="KW-0436">Ligase</keyword>
<keyword id="KW-0511">Multifunctional enzyme</keyword>
<keyword id="KW-0547">Nucleotide-binding</keyword>
<keyword id="KW-0566">Pantothenate biosynthesis</keyword>
<keyword id="KW-0808">Transferase</keyword>
<organism>
    <name type="scientific">Trichodesmium erythraeum (strain IMS101)</name>
    <dbReference type="NCBI Taxonomy" id="203124"/>
    <lineage>
        <taxon>Bacteria</taxon>
        <taxon>Bacillati</taxon>
        <taxon>Cyanobacteriota</taxon>
        <taxon>Cyanophyceae</taxon>
        <taxon>Oscillatoriophycideae</taxon>
        <taxon>Oscillatoriales</taxon>
        <taxon>Microcoleaceae</taxon>
        <taxon>Trichodesmium</taxon>
    </lineage>
</organism>
<gene>
    <name evidence="1" type="primary">panC/cmk</name>
    <name type="ordered locus">Tery_2799</name>
</gene>
<accession>Q110U9</accession>
<comment type="function">
    <text evidence="1">Catalyzes the condensation of pantoate with beta-alanine in an ATP-dependent reaction via a pantoyl-adenylate intermediate.</text>
</comment>
<comment type="function">
    <text evidence="1">Catalyzes the transfer of a phosphate group from ATP to either CMP or dCMP to form CDP or dCDP and ADP, respectively.</text>
</comment>
<comment type="catalytic activity">
    <reaction evidence="1">
        <text>(R)-pantoate + beta-alanine + ATP = (R)-pantothenate + AMP + diphosphate + H(+)</text>
        <dbReference type="Rhea" id="RHEA:10912"/>
        <dbReference type="ChEBI" id="CHEBI:15378"/>
        <dbReference type="ChEBI" id="CHEBI:15980"/>
        <dbReference type="ChEBI" id="CHEBI:29032"/>
        <dbReference type="ChEBI" id="CHEBI:30616"/>
        <dbReference type="ChEBI" id="CHEBI:33019"/>
        <dbReference type="ChEBI" id="CHEBI:57966"/>
        <dbReference type="ChEBI" id="CHEBI:456215"/>
        <dbReference type="EC" id="6.3.2.1"/>
    </reaction>
</comment>
<comment type="catalytic activity">
    <reaction evidence="1">
        <text>CMP + ATP = CDP + ADP</text>
        <dbReference type="Rhea" id="RHEA:11600"/>
        <dbReference type="ChEBI" id="CHEBI:30616"/>
        <dbReference type="ChEBI" id="CHEBI:58069"/>
        <dbReference type="ChEBI" id="CHEBI:60377"/>
        <dbReference type="ChEBI" id="CHEBI:456216"/>
        <dbReference type="EC" id="2.7.4.25"/>
    </reaction>
</comment>
<comment type="catalytic activity">
    <reaction evidence="1">
        <text>dCMP + ATP = dCDP + ADP</text>
        <dbReference type="Rhea" id="RHEA:25094"/>
        <dbReference type="ChEBI" id="CHEBI:30616"/>
        <dbReference type="ChEBI" id="CHEBI:57566"/>
        <dbReference type="ChEBI" id="CHEBI:58593"/>
        <dbReference type="ChEBI" id="CHEBI:456216"/>
        <dbReference type="EC" id="2.7.4.25"/>
    </reaction>
</comment>
<comment type="pathway">
    <text evidence="1">Cofactor biosynthesis; (R)-pantothenate biosynthesis; (R)-pantothenate from (R)-pantoate and beta-alanine: step 1/1.</text>
</comment>
<comment type="subcellular location">
    <subcellularLocation>
        <location evidence="1">Cytoplasm</location>
    </subcellularLocation>
</comment>
<comment type="similarity">
    <text evidence="1">In the N-terminal section; belongs to the pantothenate synthetase family.</text>
</comment>
<comment type="similarity">
    <text evidence="1">In the C-terminal section; belongs to the cytidylate kinase family. Type 1 subfamily.</text>
</comment>
<feature type="chain" id="PRO_0000333303" description="Bifunctional pantoate ligase/cytidylate kinase">
    <location>
        <begin position="1"/>
        <end position="528"/>
    </location>
</feature>
<feature type="region of interest" description="Pantoate--beta-alanine ligase">
    <location>
        <begin position="1"/>
        <end position="293"/>
    </location>
</feature>
<feature type="region of interest" description="Cytidylate kinase" evidence="1">
    <location>
        <begin position="294"/>
        <end position="528"/>
    </location>
</feature>
<feature type="active site" description="Proton donor" evidence="1">
    <location>
        <position position="41"/>
    </location>
</feature>
<feature type="binding site" evidence="1">
    <location>
        <begin position="34"/>
        <end position="41"/>
    </location>
    <ligand>
        <name>ATP</name>
        <dbReference type="ChEBI" id="CHEBI:30616"/>
    </ligand>
</feature>
<feature type="binding site" evidence="1">
    <location>
        <position position="65"/>
    </location>
    <ligand>
        <name>(R)-pantoate</name>
        <dbReference type="ChEBI" id="CHEBI:15980"/>
    </ligand>
</feature>
<feature type="binding site" evidence="1">
    <location>
        <position position="65"/>
    </location>
    <ligand>
        <name>beta-alanine</name>
        <dbReference type="ChEBI" id="CHEBI:57966"/>
    </ligand>
</feature>
<feature type="binding site" evidence="1">
    <location>
        <begin position="160"/>
        <end position="163"/>
    </location>
    <ligand>
        <name>ATP</name>
        <dbReference type="ChEBI" id="CHEBI:30616"/>
    </ligand>
</feature>
<feature type="binding site" evidence="1">
    <location>
        <position position="166"/>
    </location>
    <ligand>
        <name>(R)-pantoate</name>
        <dbReference type="ChEBI" id="CHEBI:15980"/>
    </ligand>
</feature>
<feature type="binding site" evidence="1">
    <location>
        <position position="189"/>
    </location>
    <ligand>
        <name>ATP</name>
        <dbReference type="ChEBI" id="CHEBI:30616"/>
    </ligand>
</feature>
<feature type="binding site" evidence="1">
    <location>
        <begin position="197"/>
        <end position="200"/>
    </location>
    <ligand>
        <name>ATP</name>
        <dbReference type="ChEBI" id="CHEBI:30616"/>
    </ligand>
</feature>
<name>PANCY_TRIEI</name>
<evidence type="ECO:0000255" key="1">
    <source>
        <dbReference type="HAMAP-Rule" id="MF_01349"/>
    </source>
</evidence>
<protein>
    <recommendedName>
        <fullName evidence="1">Bifunctional pantoate ligase/cytidylate kinase</fullName>
    </recommendedName>
    <domain>
        <recommendedName>
            <fullName evidence="1">Pantothenate synthetase</fullName>
            <shortName evidence="1">PS</shortName>
            <ecNumber evidence="1">6.3.2.1</ecNumber>
        </recommendedName>
        <alternativeName>
            <fullName evidence="1">Pantoate--beta-alanine ligase</fullName>
        </alternativeName>
        <alternativeName>
            <fullName evidence="1">Pantoate-activating enzyme</fullName>
        </alternativeName>
    </domain>
    <domain>
        <recommendedName>
            <fullName evidence="1">Cytidylate kinase</fullName>
            <shortName evidence="1">CK</shortName>
            <ecNumber evidence="1">2.7.4.25</ecNumber>
        </recommendedName>
        <alternativeName>
            <fullName evidence="1">Cytidine monophosphate kinase</fullName>
            <shortName evidence="1">CMP kinase</shortName>
        </alternativeName>
    </domain>
</protein>
<dbReference type="EC" id="6.3.2.1" evidence="1"/>
<dbReference type="EC" id="2.7.4.25" evidence="1"/>
<dbReference type="EMBL" id="CP000393">
    <property type="protein sequence ID" value="ABG51975.1"/>
    <property type="molecule type" value="Genomic_DNA"/>
</dbReference>
<dbReference type="RefSeq" id="WP_011612336.1">
    <property type="nucleotide sequence ID" value="NC_008312.1"/>
</dbReference>
<dbReference type="SMR" id="Q110U9"/>
<dbReference type="STRING" id="203124.Tery_2799"/>
<dbReference type="KEGG" id="ter:Tery_2799"/>
<dbReference type="eggNOG" id="COG0283">
    <property type="taxonomic scope" value="Bacteria"/>
</dbReference>
<dbReference type="eggNOG" id="COG0414">
    <property type="taxonomic scope" value="Bacteria"/>
</dbReference>
<dbReference type="HOGENOM" id="CLU_037427_0_0_3"/>
<dbReference type="OrthoDB" id="9773087at2"/>
<dbReference type="UniPathway" id="UPA00028">
    <property type="reaction ID" value="UER00005"/>
</dbReference>
<dbReference type="GO" id="GO:0005829">
    <property type="term" value="C:cytosol"/>
    <property type="evidence" value="ECO:0007669"/>
    <property type="project" value="TreeGrafter"/>
</dbReference>
<dbReference type="GO" id="GO:0005524">
    <property type="term" value="F:ATP binding"/>
    <property type="evidence" value="ECO:0007669"/>
    <property type="project" value="UniProtKB-UniRule"/>
</dbReference>
<dbReference type="GO" id="GO:0036430">
    <property type="term" value="F:CMP kinase activity"/>
    <property type="evidence" value="ECO:0007669"/>
    <property type="project" value="RHEA"/>
</dbReference>
<dbReference type="GO" id="GO:0036431">
    <property type="term" value="F:dCMP kinase activity"/>
    <property type="evidence" value="ECO:0007669"/>
    <property type="project" value="RHEA"/>
</dbReference>
<dbReference type="GO" id="GO:0004592">
    <property type="term" value="F:pantoate-beta-alanine ligase activity"/>
    <property type="evidence" value="ECO:0007669"/>
    <property type="project" value="UniProtKB-UniRule"/>
</dbReference>
<dbReference type="GO" id="GO:0015949">
    <property type="term" value="P:nucleobase-containing small molecule interconversion"/>
    <property type="evidence" value="ECO:0007669"/>
    <property type="project" value="TreeGrafter"/>
</dbReference>
<dbReference type="GO" id="GO:0015940">
    <property type="term" value="P:pantothenate biosynthetic process"/>
    <property type="evidence" value="ECO:0007669"/>
    <property type="project" value="UniProtKB-UniRule"/>
</dbReference>
<dbReference type="GO" id="GO:0006220">
    <property type="term" value="P:pyrimidine nucleotide metabolic process"/>
    <property type="evidence" value="ECO:0007669"/>
    <property type="project" value="UniProtKB-UniRule"/>
</dbReference>
<dbReference type="CDD" id="cd02020">
    <property type="entry name" value="CMPK"/>
    <property type="match status" value="1"/>
</dbReference>
<dbReference type="CDD" id="cd00560">
    <property type="entry name" value="PanC"/>
    <property type="match status" value="1"/>
</dbReference>
<dbReference type="Gene3D" id="3.40.50.620">
    <property type="entry name" value="HUPs"/>
    <property type="match status" value="1"/>
</dbReference>
<dbReference type="Gene3D" id="3.40.50.300">
    <property type="entry name" value="P-loop containing nucleotide triphosphate hydrolases"/>
    <property type="match status" value="1"/>
</dbReference>
<dbReference type="Gene3D" id="3.30.1300.10">
    <property type="entry name" value="Pantoate-beta-alanine ligase, C-terminal domain"/>
    <property type="match status" value="1"/>
</dbReference>
<dbReference type="HAMAP" id="MF_00238">
    <property type="entry name" value="Cytidyl_kinase_type1"/>
    <property type="match status" value="1"/>
</dbReference>
<dbReference type="HAMAP" id="MF_00158">
    <property type="entry name" value="PanC"/>
    <property type="match status" value="1"/>
</dbReference>
<dbReference type="HAMAP" id="MF_01349">
    <property type="entry name" value="PanCY"/>
    <property type="match status" value="1"/>
</dbReference>
<dbReference type="InterPro" id="IPR004821">
    <property type="entry name" value="Cyt_trans-like"/>
</dbReference>
<dbReference type="InterPro" id="IPR003136">
    <property type="entry name" value="Cytidylate_kin"/>
</dbReference>
<dbReference type="InterPro" id="IPR011994">
    <property type="entry name" value="Cytidylate_kinase_dom"/>
</dbReference>
<dbReference type="InterPro" id="IPR027417">
    <property type="entry name" value="P-loop_NTPase"/>
</dbReference>
<dbReference type="InterPro" id="IPR003721">
    <property type="entry name" value="Pantoate_ligase"/>
</dbReference>
<dbReference type="InterPro" id="IPR024894">
    <property type="entry name" value="Pantoate_ligase/cytidylate_kin"/>
</dbReference>
<dbReference type="InterPro" id="IPR042176">
    <property type="entry name" value="Pantoate_ligase_C"/>
</dbReference>
<dbReference type="InterPro" id="IPR014729">
    <property type="entry name" value="Rossmann-like_a/b/a_fold"/>
</dbReference>
<dbReference type="NCBIfam" id="TIGR00017">
    <property type="entry name" value="cmk"/>
    <property type="match status" value="1"/>
</dbReference>
<dbReference type="NCBIfam" id="TIGR00125">
    <property type="entry name" value="cyt_tran_rel"/>
    <property type="match status" value="1"/>
</dbReference>
<dbReference type="NCBIfam" id="TIGR00018">
    <property type="entry name" value="panC"/>
    <property type="match status" value="1"/>
</dbReference>
<dbReference type="NCBIfam" id="NF010004">
    <property type="entry name" value="PRK13477.1"/>
    <property type="match status" value="1"/>
</dbReference>
<dbReference type="PANTHER" id="PTHR21299:SF2">
    <property type="entry name" value="CYTIDYLATE KINASE"/>
    <property type="match status" value="1"/>
</dbReference>
<dbReference type="PANTHER" id="PTHR21299">
    <property type="entry name" value="CYTIDYLATE KINASE/PANTOATE-BETA-ALANINE LIGASE"/>
    <property type="match status" value="1"/>
</dbReference>
<dbReference type="Pfam" id="PF02224">
    <property type="entry name" value="Cytidylate_kin"/>
    <property type="match status" value="1"/>
</dbReference>
<dbReference type="Pfam" id="PF02569">
    <property type="entry name" value="Pantoate_ligase"/>
    <property type="match status" value="1"/>
</dbReference>
<dbReference type="SUPFAM" id="SSF52374">
    <property type="entry name" value="Nucleotidylyl transferase"/>
    <property type="match status" value="1"/>
</dbReference>
<dbReference type="SUPFAM" id="SSF52540">
    <property type="entry name" value="P-loop containing nucleoside triphosphate hydrolases"/>
    <property type="match status" value="1"/>
</dbReference>
<reference key="1">
    <citation type="journal article" date="2015" name="Proc. Natl. Acad. Sci. U.S.A.">
        <title>Trichodesmium genome maintains abundant, widespread noncoding DNA in situ, despite oligotrophic lifestyle.</title>
        <authorList>
            <person name="Walworth N."/>
            <person name="Pfreundt U."/>
            <person name="Nelson W.C."/>
            <person name="Mincer T."/>
            <person name="Heidelberg J.F."/>
            <person name="Fu F."/>
            <person name="Waterbury J.B."/>
            <person name="Glavina del Rio T."/>
            <person name="Goodwin L."/>
            <person name="Kyrpides N.C."/>
            <person name="Land M.L."/>
            <person name="Woyke T."/>
            <person name="Hutchins D.A."/>
            <person name="Hess W.R."/>
            <person name="Webb E.A."/>
        </authorList>
    </citation>
    <scope>NUCLEOTIDE SEQUENCE [LARGE SCALE GENOMIC DNA]</scope>
    <source>
        <strain>IMS101</strain>
    </source>
</reference>
<sequence length="528" mass="58427">MRLFTTIAGLNCYLNLLRNEQKKSPDTIGLVPTMGALHKGHLSLIKRAREENTITVVSIFINPLQFAPREDFKEYPRQLEIDKEFCEKEGVDVIFAPTPETMGMKNALSTDAQDSTTTVVSPSHMTSIMCGVSRPNFFQGVATIVTKLLNIVKPNNAYFGQKDAQQLAIIKQLVKDLSLPVNIVYCPIIREASGLAISSRNQYLTPEQKEQASMLYASLCYGRKIFLENQDTPNILETVENAVKEKLASQPVLKLEYLEIVDPETLKPLENIQNIGLLAIAAYIGSCRLIDNILLRNRKPIIAIDGPAGAGKSTVTKLVGQSLGLLYLDTGAMYRAVTWMVLQSGVPVTDQAQVAELVSQCQISFNSPENNHVVINGQDVTVAIRSREVTNNVSIVAAQPTVRYFMVKQQQQFGAKGGIVAEGRDIGSHVFPNAELKIFLTASLKERSRRRLVELKQKGQTNISLEEVEKEIICRDQKDTNRKISPLRKSSDAVEISTDGLSIGEVTQKIVDIFKTTCYGKSSVNNII</sequence>